<organism>
    <name type="scientific">Geobacillus thermodenitrificans (strain NG80-2)</name>
    <dbReference type="NCBI Taxonomy" id="420246"/>
    <lineage>
        <taxon>Bacteria</taxon>
        <taxon>Bacillati</taxon>
        <taxon>Bacillota</taxon>
        <taxon>Bacilli</taxon>
        <taxon>Bacillales</taxon>
        <taxon>Anoxybacillaceae</taxon>
        <taxon>Geobacillus</taxon>
    </lineage>
</organism>
<sequence>MAKKTVGLLVMAYGTPYKEDDIERYYTHIRHGRKPPQEQIDDLKARYRAIGGLSPLAKITEAQAKQLEKRLNEMQDEVEFCMYLGLKHIEPFIEDAVERMHADGVKEAVAIVLAPHYSTFSICSYNERAKAAAEKLGGPVIYTIDQWYDEPKFLQYWSEKVKAIFDAMKEREREQAVLIVSAHSLPEKIIQAGDPYPAQLEDTAKRIAEQAGVTHYAVGWQSAGNTPEPWLGPDVQDLTRQLHDEQGYTSFVYAPVGFVADHLEVLYDNDIECKQVTEEIGARYYRPEMPNTDPLFIDALATVVLKRLAKEGDEHE</sequence>
<proteinExistence type="inferred from homology"/>
<keyword id="KW-0963">Cytoplasm</keyword>
<keyword id="KW-0350">Heme biosynthesis</keyword>
<keyword id="KW-0408">Iron</keyword>
<keyword id="KW-0456">Lyase</keyword>
<keyword id="KW-0479">Metal-binding</keyword>
<keyword id="KW-0627">Porphyrin biosynthesis</keyword>
<feature type="chain" id="PRO_1000019306" description="Coproporphyrin III ferrochelatase">
    <location>
        <begin position="1"/>
        <end position="316"/>
    </location>
</feature>
<feature type="binding site" description="axial binding residue" evidence="1">
    <location>
        <position position="13"/>
    </location>
    <ligand>
        <name>Fe-coproporphyrin III</name>
        <dbReference type="ChEBI" id="CHEBI:68438"/>
    </ligand>
    <ligandPart>
        <name>Fe</name>
        <dbReference type="ChEBI" id="CHEBI:18248"/>
    </ligandPart>
</feature>
<feature type="binding site" evidence="1">
    <location>
        <position position="30"/>
    </location>
    <ligand>
        <name>Fe-coproporphyrin III</name>
        <dbReference type="ChEBI" id="CHEBI:68438"/>
    </ligand>
</feature>
<feature type="binding site" evidence="1">
    <location>
        <begin position="46"/>
        <end position="47"/>
    </location>
    <ligand>
        <name>Fe-coproporphyrin III</name>
        <dbReference type="ChEBI" id="CHEBI:68438"/>
    </ligand>
</feature>
<feature type="binding site" evidence="1">
    <location>
        <position position="54"/>
    </location>
    <ligand>
        <name>Fe-coproporphyrin III</name>
        <dbReference type="ChEBI" id="CHEBI:68438"/>
    </ligand>
</feature>
<feature type="binding site" evidence="1">
    <location>
        <position position="125"/>
    </location>
    <ligand>
        <name>Fe-coproporphyrin III</name>
        <dbReference type="ChEBI" id="CHEBI:68438"/>
    </ligand>
</feature>
<feature type="binding site" evidence="1">
    <location>
        <position position="183"/>
    </location>
    <ligand>
        <name>Fe(2+)</name>
        <dbReference type="ChEBI" id="CHEBI:29033"/>
    </ligand>
</feature>
<feature type="binding site" evidence="1">
    <location>
        <position position="264"/>
    </location>
    <ligand>
        <name>Fe(2+)</name>
        <dbReference type="ChEBI" id="CHEBI:29033"/>
    </ligand>
</feature>
<name>CPFC_GEOTN</name>
<dbReference type="EC" id="4.99.1.9" evidence="1"/>
<dbReference type="EMBL" id="CP000557">
    <property type="protein sequence ID" value="ABO65952.1"/>
    <property type="molecule type" value="Genomic_DNA"/>
</dbReference>
<dbReference type="RefSeq" id="WP_011886873.1">
    <property type="nucleotide sequence ID" value="NC_009328.1"/>
</dbReference>
<dbReference type="SMR" id="A4IKU8"/>
<dbReference type="KEGG" id="gtn:GTNG_0570"/>
<dbReference type="eggNOG" id="COG0276">
    <property type="taxonomic scope" value="Bacteria"/>
</dbReference>
<dbReference type="HOGENOM" id="CLU_018884_2_1_9"/>
<dbReference type="UniPathway" id="UPA00252"/>
<dbReference type="Proteomes" id="UP000001578">
    <property type="component" value="Chromosome"/>
</dbReference>
<dbReference type="GO" id="GO:0005737">
    <property type="term" value="C:cytoplasm"/>
    <property type="evidence" value="ECO:0007669"/>
    <property type="project" value="UniProtKB-SubCell"/>
</dbReference>
<dbReference type="GO" id="GO:0004325">
    <property type="term" value="F:ferrochelatase activity"/>
    <property type="evidence" value="ECO:0007669"/>
    <property type="project" value="UniProtKB-UniRule"/>
</dbReference>
<dbReference type="GO" id="GO:0046872">
    <property type="term" value="F:metal ion binding"/>
    <property type="evidence" value="ECO:0007669"/>
    <property type="project" value="UniProtKB-KW"/>
</dbReference>
<dbReference type="GO" id="GO:0006783">
    <property type="term" value="P:heme biosynthetic process"/>
    <property type="evidence" value="ECO:0007669"/>
    <property type="project" value="UniProtKB-UniRule"/>
</dbReference>
<dbReference type="CDD" id="cd00419">
    <property type="entry name" value="Ferrochelatase_C"/>
    <property type="match status" value="1"/>
</dbReference>
<dbReference type="CDD" id="cd03411">
    <property type="entry name" value="Ferrochelatase_N"/>
    <property type="match status" value="1"/>
</dbReference>
<dbReference type="FunFam" id="3.40.50.1400:FF:000009">
    <property type="entry name" value="Ferrochelatase"/>
    <property type="match status" value="1"/>
</dbReference>
<dbReference type="Gene3D" id="3.40.50.1400">
    <property type="match status" value="2"/>
</dbReference>
<dbReference type="HAMAP" id="MF_00323">
    <property type="entry name" value="Ferrochelatase"/>
    <property type="match status" value="1"/>
</dbReference>
<dbReference type="InterPro" id="IPR001015">
    <property type="entry name" value="Ferrochelatase"/>
</dbReference>
<dbReference type="InterPro" id="IPR019772">
    <property type="entry name" value="Ferrochelatase_AS"/>
</dbReference>
<dbReference type="InterPro" id="IPR033644">
    <property type="entry name" value="Ferrochelatase_C"/>
</dbReference>
<dbReference type="InterPro" id="IPR033659">
    <property type="entry name" value="Ferrochelatase_N"/>
</dbReference>
<dbReference type="NCBIfam" id="TIGR00109">
    <property type="entry name" value="hemH"/>
    <property type="match status" value="1"/>
</dbReference>
<dbReference type="NCBIfam" id="NF009095">
    <property type="entry name" value="PRK12435.1"/>
    <property type="match status" value="1"/>
</dbReference>
<dbReference type="PANTHER" id="PTHR11108">
    <property type="entry name" value="FERROCHELATASE"/>
    <property type="match status" value="1"/>
</dbReference>
<dbReference type="PANTHER" id="PTHR11108:SF1">
    <property type="entry name" value="FERROCHELATASE, MITOCHONDRIAL"/>
    <property type="match status" value="1"/>
</dbReference>
<dbReference type="Pfam" id="PF00762">
    <property type="entry name" value="Ferrochelatase"/>
    <property type="match status" value="1"/>
</dbReference>
<dbReference type="SUPFAM" id="SSF53800">
    <property type="entry name" value="Chelatase"/>
    <property type="match status" value="1"/>
</dbReference>
<dbReference type="PROSITE" id="PS00534">
    <property type="entry name" value="FERROCHELATASE"/>
    <property type="match status" value="1"/>
</dbReference>
<accession>A4IKU8</accession>
<gene>
    <name evidence="1" type="primary">cpfC</name>
    <name type="ordered locus">GTNG_0570</name>
</gene>
<evidence type="ECO:0000255" key="1">
    <source>
        <dbReference type="HAMAP-Rule" id="MF_00323"/>
    </source>
</evidence>
<comment type="function">
    <text evidence="1">Involved in coproporphyrin-dependent heme b biosynthesis. Catalyzes the insertion of ferrous iron into coproporphyrin III to form Fe-coproporphyrin III.</text>
</comment>
<comment type="catalytic activity">
    <reaction evidence="1">
        <text>Fe-coproporphyrin III + 2 H(+) = coproporphyrin III + Fe(2+)</text>
        <dbReference type="Rhea" id="RHEA:49572"/>
        <dbReference type="ChEBI" id="CHEBI:15378"/>
        <dbReference type="ChEBI" id="CHEBI:29033"/>
        <dbReference type="ChEBI" id="CHEBI:68438"/>
        <dbReference type="ChEBI" id="CHEBI:131725"/>
        <dbReference type="EC" id="4.99.1.9"/>
    </reaction>
    <physiologicalReaction direction="right-to-left" evidence="1">
        <dbReference type="Rhea" id="RHEA:49574"/>
    </physiologicalReaction>
</comment>
<comment type="pathway">
    <text evidence="1">Porphyrin-containing compound metabolism; protoheme biosynthesis.</text>
</comment>
<comment type="subcellular location">
    <subcellularLocation>
        <location evidence="1">Cytoplasm</location>
    </subcellularLocation>
</comment>
<comment type="similarity">
    <text evidence="1">Belongs to the ferrochelatase family.</text>
</comment>
<reference key="1">
    <citation type="journal article" date="2007" name="Proc. Natl. Acad. Sci. U.S.A.">
        <title>Genome and proteome of long-chain alkane degrading Geobacillus thermodenitrificans NG80-2 isolated from a deep-subsurface oil reservoir.</title>
        <authorList>
            <person name="Feng L."/>
            <person name="Wang W."/>
            <person name="Cheng J."/>
            <person name="Ren Y."/>
            <person name="Zhao G."/>
            <person name="Gao C."/>
            <person name="Tang Y."/>
            <person name="Liu X."/>
            <person name="Han W."/>
            <person name="Peng X."/>
            <person name="Liu R."/>
            <person name="Wang L."/>
        </authorList>
    </citation>
    <scope>NUCLEOTIDE SEQUENCE [LARGE SCALE GENOMIC DNA]</scope>
    <source>
        <strain>NG80-2</strain>
    </source>
</reference>
<protein>
    <recommendedName>
        <fullName evidence="1">Coproporphyrin III ferrochelatase</fullName>
        <ecNumber evidence="1">4.99.1.9</ecNumber>
    </recommendedName>
</protein>